<reference key="1">
    <citation type="journal article" date="2005" name="Nature">
        <title>The genome of the social amoeba Dictyostelium discoideum.</title>
        <authorList>
            <person name="Eichinger L."/>
            <person name="Pachebat J.A."/>
            <person name="Gloeckner G."/>
            <person name="Rajandream M.A."/>
            <person name="Sucgang R."/>
            <person name="Berriman M."/>
            <person name="Song J."/>
            <person name="Olsen R."/>
            <person name="Szafranski K."/>
            <person name="Xu Q."/>
            <person name="Tunggal B."/>
            <person name="Kummerfeld S."/>
            <person name="Madera M."/>
            <person name="Konfortov B.A."/>
            <person name="Rivero F."/>
            <person name="Bankier A.T."/>
            <person name="Lehmann R."/>
            <person name="Hamlin N."/>
            <person name="Davies R."/>
            <person name="Gaudet P."/>
            <person name="Fey P."/>
            <person name="Pilcher K."/>
            <person name="Chen G."/>
            <person name="Saunders D."/>
            <person name="Sodergren E.J."/>
            <person name="Davis P."/>
            <person name="Kerhornou A."/>
            <person name="Nie X."/>
            <person name="Hall N."/>
            <person name="Anjard C."/>
            <person name="Hemphill L."/>
            <person name="Bason N."/>
            <person name="Farbrother P."/>
            <person name="Desany B."/>
            <person name="Just E."/>
            <person name="Morio T."/>
            <person name="Rost R."/>
            <person name="Churcher C.M."/>
            <person name="Cooper J."/>
            <person name="Haydock S."/>
            <person name="van Driessche N."/>
            <person name="Cronin A."/>
            <person name="Goodhead I."/>
            <person name="Muzny D.M."/>
            <person name="Mourier T."/>
            <person name="Pain A."/>
            <person name="Lu M."/>
            <person name="Harper D."/>
            <person name="Lindsay R."/>
            <person name="Hauser H."/>
            <person name="James K.D."/>
            <person name="Quiles M."/>
            <person name="Madan Babu M."/>
            <person name="Saito T."/>
            <person name="Buchrieser C."/>
            <person name="Wardroper A."/>
            <person name="Felder M."/>
            <person name="Thangavelu M."/>
            <person name="Johnson D."/>
            <person name="Knights A."/>
            <person name="Loulseged H."/>
            <person name="Mungall K.L."/>
            <person name="Oliver K."/>
            <person name="Price C."/>
            <person name="Quail M.A."/>
            <person name="Urushihara H."/>
            <person name="Hernandez J."/>
            <person name="Rabbinowitsch E."/>
            <person name="Steffen D."/>
            <person name="Sanders M."/>
            <person name="Ma J."/>
            <person name="Kohara Y."/>
            <person name="Sharp S."/>
            <person name="Simmonds M.N."/>
            <person name="Spiegler S."/>
            <person name="Tivey A."/>
            <person name="Sugano S."/>
            <person name="White B."/>
            <person name="Walker D."/>
            <person name="Woodward J.R."/>
            <person name="Winckler T."/>
            <person name="Tanaka Y."/>
            <person name="Shaulsky G."/>
            <person name="Schleicher M."/>
            <person name="Weinstock G.M."/>
            <person name="Rosenthal A."/>
            <person name="Cox E.C."/>
            <person name="Chisholm R.L."/>
            <person name="Gibbs R.A."/>
            <person name="Loomis W.F."/>
            <person name="Platzer M."/>
            <person name="Kay R.R."/>
            <person name="Williams J.G."/>
            <person name="Dear P.H."/>
            <person name="Noegel A.A."/>
            <person name="Barrell B.G."/>
            <person name="Kuspa A."/>
        </authorList>
    </citation>
    <scope>NUCLEOTIDE SEQUENCE [LARGE SCALE GENOMIC DNA]</scope>
    <source>
        <strain>AX4</strain>
    </source>
</reference>
<evidence type="ECO:0000255" key="1"/>
<evidence type="ECO:0000256" key="2">
    <source>
        <dbReference type="SAM" id="MobiDB-lite"/>
    </source>
</evidence>
<proteinExistence type="predicted"/>
<name>Y8755_DICDI</name>
<organism>
    <name type="scientific">Dictyostelium discoideum</name>
    <name type="common">Social amoeba</name>
    <dbReference type="NCBI Taxonomy" id="44689"/>
    <lineage>
        <taxon>Eukaryota</taxon>
        <taxon>Amoebozoa</taxon>
        <taxon>Evosea</taxon>
        <taxon>Eumycetozoa</taxon>
        <taxon>Dictyostelia</taxon>
        <taxon>Dictyosteliales</taxon>
        <taxon>Dictyosteliaceae</taxon>
        <taxon>Dictyostelium</taxon>
    </lineage>
</organism>
<dbReference type="EMBL" id="AAFI02000103">
    <property type="protein sequence ID" value="EAL63620.1"/>
    <property type="molecule type" value="Genomic_DNA"/>
</dbReference>
<dbReference type="RefSeq" id="XP_637127.1">
    <property type="nucleotide sequence ID" value="XM_632035.1"/>
</dbReference>
<dbReference type="SMR" id="Q54K37"/>
<dbReference type="FunCoup" id="Q54K37">
    <property type="interactions" value="744"/>
</dbReference>
<dbReference type="PaxDb" id="44689-DDB0187556"/>
<dbReference type="EnsemblProtists" id="EAL63620">
    <property type="protein sequence ID" value="EAL63620"/>
    <property type="gene ID" value="DDB_G0287623"/>
</dbReference>
<dbReference type="GeneID" id="8626222"/>
<dbReference type="KEGG" id="ddi:DDB_G0287623"/>
<dbReference type="dictyBase" id="DDB_G0287623"/>
<dbReference type="VEuPathDB" id="AmoebaDB:DDB_G0287623"/>
<dbReference type="eggNOG" id="ENOG502RI4F">
    <property type="taxonomic scope" value="Eukaryota"/>
</dbReference>
<dbReference type="HOGENOM" id="CLU_488724_0_0_1"/>
<dbReference type="InParanoid" id="Q54K37"/>
<dbReference type="OMA" id="NCIDHIN"/>
<dbReference type="PRO" id="PR:Q54K37"/>
<dbReference type="Proteomes" id="UP000002195">
    <property type="component" value="Chromosome 5"/>
</dbReference>
<gene>
    <name type="ORF">DDB_G0287623</name>
</gene>
<protein>
    <recommendedName>
        <fullName>Putative uncharacterized protein DDB_G0287623</fullName>
    </recommendedName>
</protein>
<keyword id="KW-0175">Coiled coil</keyword>
<keyword id="KW-1185">Reference proteome</keyword>
<accession>Q54K37</accession>
<sequence>MENEEQESGEILSSEEMMMLDIQPKPLSSLLSFSTLSPSVDENNNCDFDDLNSIFKDFQKQKKNLKDNILKFYNKKKENNDNFFNILKSYITTNNNYNNHFYFIISIYNILYENYKDETPFEYFIEIIYIVSINDHLGPSDRLSSILFFSKYFNKNGNKNQLFNSLLSLIKIENISSTIVNNIIEFLGSILSLSISLGLYNILQLTYDWIIEFANQPTTAITELLNQIINNINNINNNNNNNIKTETESEIESKSESESESESKIETEIEIVTEREIEIEMEIKKENEKQVKVDIFYISIKLLDILINDHLILNESSNNFENLPSNSFDFSSLLTSIIISHYLSPFNKTNSYINDSNKRDNNYIEFTVIPRTLSLLSNYWLRQTPQLLFKFNEKQSKSLNHINLLKEIITISIFSNYINYNNNNNNNNNNNNNNNNNNNNNNNNSGEKNELVEPYIMKLNSVLIDAIYQISECKNDDFSNLIIKNISNTLNPEFFINIITMINNFNFDNKKFVDRISTIIQIYSKTCKRINPNYLNTHIELLKQLNVQTQISITILNQ</sequence>
<feature type="chain" id="PRO_0000347016" description="Putative uncharacterized protein DDB_G0287623">
    <location>
        <begin position="1"/>
        <end position="558"/>
    </location>
</feature>
<feature type="region of interest" description="Disordered" evidence="2">
    <location>
        <begin position="239"/>
        <end position="266"/>
    </location>
</feature>
<feature type="region of interest" description="Disordered" evidence="2">
    <location>
        <begin position="424"/>
        <end position="447"/>
    </location>
</feature>
<feature type="coiled-coil region" evidence="1">
    <location>
        <begin position="47"/>
        <end position="78"/>
    </location>
</feature>
<feature type="compositionally biased region" description="Basic and acidic residues" evidence="2">
    <location>
        <begin position="245"/>
        <end position="266"/>
    </location>
</feature>
<feature type="compositionally biased region" description="Low complexity" evidence="2">
    <location>
        <begin position="424"/>
        <end position="444"/>
    </location>
</feature>